<feature type="chain" id="PRO_0000116755" description="Uncharacterized protein C25B2.08">
    <location>
        <begin position="1"/>
        <end position="125"/>
    </location>
</feature>
<feature type="region of interest" description="Disordered" evidence="1">
    <location>
        <begin position="1"/>
        <end position="35"/>
    </location>
</feature>
<feature type="region of interest" description="Disordered" evidence="1">
    <location>
        <begin position="44"/>
        <end position="63"/>
    </location>
</feature>
<feature type="compositionally biased region" description="Polar residues" evidence="1">
    <location>
        <begin position="1"/>
        <end position="33"/>
    </location>
</feature>
<feature type="compositionally biased region" description="Basic residues" evidence="1">
    <location>
        <begin position="53"/>
        <end position="63"/>
    </location>
</feature>
<gene>
    <name type="ORF">SPBC25B2.08</name>
</gene>
<reference key="1">
    <citation type="journal article" date="2002" name="Nature">
        <title>The genome sequence of Schizosaccharomyces pombe.</title>
        <authorList>
            <person name="Wood V."/>
            <person name="Gwilliam R."/>
            <person name="Rajandream M.A."/>
            <person name="Lyne M.H."/>
            <person name="Lyne R."/>
            <person name="Stewart A."/>
            <person name="Sgouros J.G."/>
            <person name="Peat N."/>
            <person name="Hayles J."/>
            <person name="Baker S.G."/>
            <person name="Basham D."/>
            <person name="Bowman S."/>
            <person name="Brooks K."/>
            <person name="Brown D."/>
            <person name="Brown S."/>
            <person name="Chillingworth T."/>
            <person name="Churcher C.M."/>
            <person name="Collins M."/>
            <person name="Connor R."/>
            <person name="Cronin A."/>
            <person name="Davis P."/>
            <person name="Feltwell T."/>
            <person name="Fraser A."/>
            <person name="Gentles S."/>
            <person name="Goble A."/>
            <person name="Hamlin N."/>
            <person name="Harris D.E."/>
            <person name="Hidalgo J."/>
            <person name="Hodgson G."/>
            <person name="Holroyd S."/>
            <person name="Hornsby T."/>
            <person name="Howarth S."/>
            <person name="Huckle E.J."/>
            <person name="Hunt S."/>
            <person name="Jagels K."/>
            <person name="James K.D."/>
            <person name="Jones L."/>
            <person name="Jones M."/>
            <person name="Leather S."/>
            <person name="McDonald S."/>
            <person name="McLean J."/>
            <person name="Mooney P."/>
            <person name="Moule S."/>
            <person name="Mungall K.L."/>
            <person name="Murphy L.D."/>
            <person name="Niblett D."/>
            <person name="Odell C."/>
            <person name="Oliver K."/>
            <person name="O'Neil S."/>
            <person name="Pearson D."/>
            <person name="Quail M.A."/>
            <person name="Rabbinowitsch E."/>
            <person name="Rutherford K.M."/>
            <person name="Rutter S."/>
            <person name="Saunders D."/>
            <person name="Seeger K."/>
            <person name="Sharp S."/>
            <person name="Skelton J."/>
            <person name="Simmonds M.N."/>
            <person name="Squares R."/>
            <person name="Squares S."/>
            <person name="Stevens K."/>
            <person name="Taylor K."/>
            <person name="Taylor R.G."/>
            <person name="Tivey A."/>
            <person name="Walsh S.V."/>
            <person name="Warren T."/>
            <person name="Whitehead S."/>
            <person name="Woodward J.R."/>
            <person name="Volckaert G."/>
            <person name="Aert R."/>
            <person name="Robben J."/>
            <person name="Grymonprez B."/>
            <person name="Weltjens I."/>
            <person name="Vanstreels E."/>
            <person name="Rieger M."/>
            <person name="Schaefer M."/>
            <person name="Mueller-Auer S."/>
            <person name="Gabel C."/>
            <person name="Fuchs M."/>
            <person name="Duesterhoeft A."/>
            <person name="Fritzc C."/>
            <person name="Holzer E."/>
            <person name="Moestl D."/>
            <person name="Hilbert H."/>
            <person name="Borzym K."/>
            <person name="Langer I."/>
            <person name="Beck A."/>
            <person name="Lehrach H."/>
            <person name="Reinhardt R."/>
            <person name="Pohl T.M."/>
            <person name="Eger P."/>
            <person name="Zimmermann W."/>
            <person name="Wedler H."/>
            <person name="Wambutt R."/>
            <person name="Purnelle B."/>
            <person name="Goffeau A."/>
            <person name="Cadieu E."/>
            <person name="Dreano S."/>
            <person name="Gloux S."/>
            <person name="Lelaure V."/>
            <person name="Mottier S."/>
            <person name="Galibert F."/>
            <person name="Aves S.J."/>
            <person name="Xiang Z."/>
            <person name="Hunt C."/>
            <person name="Moore K."/>
            <person name="Hurst S.M."/>
            <person name="Lucas M."/>
            <person name="Rochet M."/>
            <person name="Gaillardin C."/>
            <person name="Tallada V.A."/>
            <person name="Garzon A."/>
            <person name="Thode G."/>
            <person name="Daga R.R."/>
            <person name="Cruzado L."/>
            <person name="Jimenez J."/>
            <person name="Sanchez M."/>
            <person name="del Rey F."/>
            <person name="Benito J."/>
            <person name="Dominguez A."/>
            <person name="Revuelta J.L."/>
            <person name="Moreno S."/>
            <person name="Armstrong J."/>
            <person name="Forsburg S.L."/>
            <person name="Cerutti L."/>
            <person name="Lowe T."/>
            <person name="McCombie W.R."/>
            <person name="Paulsen I."/>
            <person name="Potashkin J."/>
            <person name="Shpakovski G.V."/>
            <person name="Ussery D."/>
            <person name="Barrell B.G."/>
            <person name="Nurse P."/>
        </authorList>
    </citation>
    <scope>NUCLEOTIDE SEQUENCE [LARGE SCALE GENOMIC DNA]</scope>
    <source>
        <strain>972 / ATCC 24843</strain>
    </source>
</reference>
<protein>
    <recommendedName>
        <fullName>Uncharacterized protein C25B2.08</fullName>
    </recommendedName>
</protein>
<name>YGB8_SCHPO</name>
<organism>
    <name type="scientific">Schizosaccharomyces pombe (strain 972 / ATCC 24843)</name>
    <name type="common">Fission yeast</name>
    <dbReference type="NCBI Taxonomy" id="284812"/>
    <lineage>
        <taxon>Eukaryota</taxon>
        <taxon>Fungi</taxon>
        <taxon>Dikarya</taxon>
        <taxon>Ascomycota</taxon>
        <taxon>Taphrinomycotina</taxon>
        <taxon>Schizosaccharomycetes</taxon>
        <taxon>Schizosaccharomycetales</taxon>
        <taxon>Schizosaccharomycetaceae</taxon>
        <taxon>Schizosaccharomyces</taxon>
    </lineage>
</organism>
<proteinExistence type="predicted"/>
<sequence>MLPHQNSSYTRQGTNDAQANDMRSPSQLPTSVNIEDPSKLCISSEKLNTPMHNRSRSGIKKHTSVKRSRSFKLFDTLFFGILRLRKQRIRSVKKVRSISSPVLISTTSALALATIEQQPVIGECS</sequence>
<keyword id="KW-1185">Reference proteome</keyword>
<evidence type="ECO:0000256" key="1">
    <source>
        <dbReference type="SAM" id="MobiDB-lite"/>
    </source>
</evidence>
<dbReference type="EMBL" id="CU329671">
    <property type="protein sequence ID" value="CAA21266.1"/>
    <property type="molecule type" value="Genomic_DNA"/>
</dbReference>
<dbReference type="PIR" id="T39984">
    <property type="entry name" value="T39984"/>
</dbReference>
<dbReference type="RefSeq" id="NP_596076.1">
    <property type="nucleotide sequence ID" value="NM_001021988.2"/>
</dbReference>
<dbReference type="BioGRID" id="277154">
    <property type="interactions" value="18"/>
</dbReference>
<dbReference type="STRING" id="284812.O74780"/>
<dbReference type="iPTMnet" id="O74780"/>
<dbReference type="PaxDb" id="4896-SPBC25B2.08.1"/>
<dbReference type="EnsemblFungi" id="SPBC25B2.08.1">
    <property type="protein sequence ID" value="SPBC25B2.08.1:pep"/>
    <property type="gene ID" value="SPBC25B2.08"/>
</dbReference>
<dbReference type="KEGG" id="spo:2540628"/>
<dbReference type="PomBase" id="SPBC25B2.08"/>
<dbReference type="VEuPathDB" id="FungiDB:SPBC25B2.08"/>
<dbReference type="HOGENOM" id="CLU_1993927_0_0_1"/>
<dbReference type="InParanoid" id="O74780"/>
<dbReference type="PRO" id="PR:O74780"/>
<dbReference type="Proteomes" id="UP000002485">
    <property type="component" value="Chromosome II"/>
</dbReference>
<dbReference type="GO" id="GO:0005635">
    <property type="term" value="C:nuclear envelope"/>
    <property type="evidence" value="ECO:0007005"/>
    <property type="project" value="PomBase"/>
</dbReference>
<dbReference type="GO" id="GO:0005634">
    <property type="term" value="C:nucleus"/>
    <property type="evidence" value="ECO:0007005"/>
    <property type="project" value="PomBase"/>
</dbReference>
<accession>O74780</accession>